<proteinExistence type="predicted"/>
<protein>
    <recommendedName>
        <fullName>Heat-labile enterotoxin IIA, B chain</fullName>
        <shortName>LT-IIA</shortName>
    </recommendedName>
</protein>
<accession>P13812</accession>
<sequence length="123" mass="13361">MSSKKIIGAFVLMTGILSGQVYAGVSEHFRNICNQTTADIVAGVQLKKYIADVNTNTRGIYVVSNTGGVWYIPGGRDYPDNFLSGEIRKTAMAAILSDTKVNLCAKTSSSPNHIWAMELDRES</sequence>
<evidence type="ECO:0000250" key="1"/>
<reference key="1">
    <citation type="journal article" date="1987" name="J. Bacteriol.">
        <title>Genetics of type IIa heat-labile enterotoxin of Escherichia coli: operon fusions, nucleotide sequence, and hybridization studies.</title>
        <authorList>
            <person name="Pickett C.L."/>
            <person name="Weinstein D.L."/>
            <person name="Holmes R.K."/>
        </authorList>
    </citation>
    <scope>NUCLEOTIDE SEQUENCE [GENOMIC DNA]</scope>
    <source>
        <strain>SA53</strain>
    </source>
</reference>
<organism>
    <name type="scientific">Escherichia coli</name>
    <dbReference type="NCBI Taxonomy" id="562"/>
    <lineage>
        <taxon>Bacteria</taxon>
        <taxon>Pseudomonadati</taxon>
        <taxon>Pseudomonadota</taxon>
        <taxon>Gammaproteobacteria</taxon>
        <taxon>Enterobacterales</taxon>
        <taxon>Enterobacteriaceae</taxon>
        <taxon>Escherichia</taxon>
    </lineage>
</organism>
<feature type="signal peptide">
    <location>
        <begin position="1"/>
        <end position="19"/>
    </location>
</feature>
<feature type="chain" id="PRO_0000019357" description="Heat-labile enterotoxin IIA, B chain">
    <location>
        <begin position="20"/>
        <end position="123"/>
    </location>
</feature>
<feature type="disulfide bond" evidence="1">
    <location>
        <begin position="33"/>
        <end position="104"/>
    </location>
</feature>
<comment type="function">
    <text>The biological activity of the toxin is produced by the A chain, which activates intracellular adenyl cyclase.</text>
</comment>
<comment type="subunit">
    <text>Heterohexamer of one A chain and of five B chains.</text>
</comment>
<keyword id="KW-1015">Disulfide bond</keyword>
<keyword id="KW-0260">Enterotoxin</keyword>
<keyword id="KW-0732">Signal</keyword>
<keyword id="KW-0800">Toxin</keyword>
<keyword id="KW-0843">Virulence</keyword>
<name>E2AB_ECOLX</name>
<dbReference type="EMBL" id="JQ031711">
    <property type="protein sequence ID" value="AAA24094.1"/>
    <property type="molecule type" value="Genomic_DNA"/>
</dbReference>
<dbReference type="PIR" id="B29831">
    <property type="entry name" value="B29831"/>
</dbReference>
<dbReference type="RefSeq" id="WP_000095643.1">
    <property type="nucleotide sequence ID" value="NZ_VOCX01000183.1"/>
</dbReference>
<dbReference type="SMR" id="P13812"/>
<dbReference type="PATRIC" id="fig|562.7992.peg.3967"/>
<dbReference type="GO" id="GO:0005576">
    <property type="term" value="C:extracellular region"/>
    <property type="evidence" value="ECO:0007669"/>
    <property type="project" value="InterPro"/>
</dbReference>
<dbReference type="GO" id="GO:0090729">
    <property type="term" value="F:toxin activity"/>
    <property type="evidence" value="ECO:0007669"/>
    <property type="project" value="UniProtKB-KW"/>
</dbReference>
<dbReference type="Gene3D" id="2.40.50.50">
    <property type="match status" value="1"/>
</dbReference>
<dbReference type="InterPro" id="IPR008992">
    <property type="entry name" value="Enterotoxin"/>
</dbReference>
<dbReference type="InterPro" id="IPR010503">
    <property type="entry name" value="LT-IIB"/>
</dbReference>
<dbReference type="InterPro" id="IPR038629">
    <property type="entry name" value="LT-IIB_sf"/>
</dbReference>
<dbReference type="Pfam" id="PF06453">
    <property type="entry name" value="LT-IIB"/>
    <property type="match status" value="1"/>
</dbReference>
<dbReference type="PIRSF" id="PIRSF019554">
    <property type="entry name" value="LT-IIB"/>
    <property type="match status" value="1"/>
</dbReference>
<dbReference type="SUPFAM" id="SSF50203">
    <property type="entry name" value="Bacterial enterotoxins"/>
    <property type="match status" value="1"/>
</dbReference>